<comment type="function">
    <text evidence="1">F(1)F(0) ATP synthase produces ATP from ADP in the presence of a proton or sodium gradient. F-type ATPases consist of two structural domains, F(1) containing the extramembraneous catalytic core and F(0) containing the membrane proton channel, linked together by a central stalk and a peripheral stalk. During catalysis, ATP synthesis in the catalytic domain of F(1) is coupled via a rotary mechanism of the central stalk subunits to proton translocation.</text>
</comment>
<comment type="function">
    <text evidence="1">Component of the F(0) channel, it forms part of the peripheral stalk, linking F(1) to F(0).</text>
</comment>
<comment type="subunit">
    <text evidence="1">F-type ATPases have 2 components, F(1) - the catalytic core - and F(0) - the membrane proton channel. F(1) has five subunits: alpha(3), beta(3), gamma(1), delta(1), epsilon(1). F(0) has three main subunits: a(1), b(2) and c(10-14). The alpha and beta chains form an alternating ring which encloses part of the gamma chain. F(1) is attached to F(0) by a central stalk formed by the gamma and epsilon chains, while a peripheral stalk is formed by the delta and b chains.</text>
</comment>
<comment type="subcellular location">
    <subcellularLocation>
        <location evidence="1">Cell inner membrane</location>
        <topology evidence="1">Single-pass membrane protein</topology>
    </subcellularLocation>
</comment>
<comment type="similarity">
    <text evidence="1">Belongs to the ATPase B chain family.</text>
</comment>
<evidence type="ECO:0000255" key="1">
    <source>
        <dbReference type="HAMAP-Rule" id="MF_01398"/>
    </source>
</evidence>
<sequence length="156" mass="17293">MNLNATIFFQMLVFFVLGWFTMKFVWPPLTKAIDERRQKIADGLAAAEKGKADLAQAQARVSLIEASAKSETHARIIEAEKQAASMIEQARREAEAERARIVAQAAQDAAQEVQRAREALRDDVAALAVKGAEQILKREVDARAHAELLNQLKAQL</sequence>
<name>ATPF_BORPE</name>
<gene>
    <name evidence="1" type="primary">atpF</name>
    <name type="ordered locus">BP3284</name>
</gene>
<reference key="1">
    <citation type="journal article" date="2003" name="Nat. Genet.">
        <title>Comparative analysis of the genome sequences of Bordetella pertussis, Bordetella parapertussis and Bordetella bronchiseptica.</title>
        <authorList>
            <person name="Parkhill J."/>
            <person name="Sebaihia M."/>
            <person name="Preston A."/>
            <person name="Murphy L.D."/>
            <person name="Thomson N.R."/>
            <person name="Harris D.E."/>
            <person name="Holden M.T.G."/>
            <person name="Churcher C.M."/>
            <person name="Bentley S.D."/>
            <person name="Mungall K.L."/>
            <person name="Cerdeno-Tarraga A.-M."/>
            <person name="Temple L."/>
            <person name="James K.D."/>
            <person name="Harris B."/>
            <person name="Quail M.A."/>
            <person name="Achtman M."/>
            <person name="Atkin R."/>
            <person name="Baker S."/>
            <person name="Basham D."/>
            <person name="Bason N."/>
            <person name="Cherevach I."/>
            <person name="Chillingworth T."/>
            <person name="Collins M."/>
            <person name="Cronin A."/>
            <person name="Davis P."/>
            <person name="Doggett J."/>
            <person name="Feltwell T."/>
            <person name="Goble A."/>
            <person name="Hamlin N."/>
            <person name="Hauser H."/>
            <person name="Holroyd S."/>
            <person name="Jagels K."/>
            <person name="Leather S."/>
            <person name="Moule S."/>
            <person name="Norberczak H."/>
            <person name="O'Neil S."/>
            <person name="Ormond D."/>
            <person name="Price C."/>
            <person name="Rabbinowitsch E."/>
            <person name="Rutter S."/>
            <person name="Sanders M."/>
            <person name="Saunders D."/>
            <person name="Seeger K."/>
            <person name="Sharp S."/>
            <person name="Simmonds M."/>
            <person name="Skelton J."/>
            <person name="Squares R."/>
            <person name="Squares S."/>
            <person name="Stevens K."/>
            <person name="Unwin L."/>
            <person name="Whitehead S."/>
            <person name="Barrell B.G."/>
            <person name="Maskell D.J."/>
        </authorList>
    </citation>
    <scope>NUCLEOTIDE SEQUENCE [LARGE SCALE GENOMIC DNA]</scope>
    <source>
        <strain>Tohama I / ATCC BAA-589 / NCTC 13251</strain>
    </source>
</reference>
<feature type="chain" id="PRO_0000368359" description="ATP synthase subunit b">
    <location>
        <begin position="1"/>
        <end position="156"/>
    </location>
</feature>
<feature type="transmembrane region" description="Helical" evidence="1">
    <location>
        <begin position="7"/>
        <end position="27"/>
    </location>
</feature>
<protein>
    <recommendedName>
        <fullName evidence="1">ATP synthase subunit b</fullName>
    </recommendedName>
    <alternativeName>
        <fullName evidence="1">ATP synthase F(0) sector subunit b</fullName>
    </alternativeName>
    <alternativeName>
        <fullName evidence="1">ATPase subunit I</fullName>
    </alternativeName>
    <alternativeName>
        <fullName evidence="1">F-type ATPase subunit b</fullName>
        <shortName evidence="1">F-ATPase subunit b</shortName>
    </alternativeName>
</protein>
<dbReference type="EMBL" id="BX640421">
    <property type="protein sequence ID" value="CAE43549.1"/>
    <property type="molecule type" value="Genomic_DNA"/>
</dbReference>
<dbReference type="RefSeq" id="NP_881826.1">
    <property type="nucleotide sequence ID" value="NC_002929.2"/>
</dbReference>
<dbReference type="RefSeq" id="WP_010931385.1">
    <property type="nucleotide sequence ID" value="NZ_CP039022.1"/>
</dbReference>
<dbReference type="SMR" id="Q7VU48"/>
<dbReference type="STRING" id="257313.BP3284"/>
<dbReference type="PaxDb" id="257313-BP3284"/>
<dbReference type="KEGG" id="bpe:BP3284"/>
<dbReference type="PATRIC" id="fig|257313.5.peg.3556"/>
<dbReference type="eggNOG" id="COG0711">
    <property type="taxonomic scope" value="Bacteria"/>
</dbReference>
<dbReference type="HOGENOM" id="CLU_079215_4_5_4"/>
<dbReference type="Proteomes" id="UP000002676">
    <property type="component" value="Chromosome"/>
</dbReference>
<dbReference type="GO" id="GO:0005886">
    <property type="term" value="C:plasma membrane"/>
    <property type="evidence" value="ECO:0007669"/>
    <property type="project" value="UniProtKB-SubCell"/>
</dbReference>
<dbReference type="GO" id="GO:0045259">
    <property type="term" value="C:proton-transporting ATP synthase complex"/>
    <property type="evidence" value="ECO:0007669"/>
    <property type="project" value="UniProtKB-KW"/>
</dbReference>
<dbReference type="GO" id="GO:0046933">
    <property type="term" value="F:proton-transporting ATP synthase activity, rotational mechanism"/>
    <property type="evidence" value="ECO:0007669"/>
    <property type="project" value="UniProtKB-UniRule"/>
</dbReference>
<dbReference type="GO" id="GO:0046961">
    <property type="term" value="F:proton-transporting ATPase activity, rotational mechanism"/>
    <property type="evidence" value="ECO:0007669"/>
    <property type="project" value="TreeGrafter"/>
</dbReference>
<dbReference type="CDD" id="cd06503">
    <property type="entry name" value="ATP-synt_Fo_b"/>
    <property type="match status" value="1"/>
</dbReference>
<dbReference type="Gene3D" id="1.20.5.620">
    <property type="entry name" value="F1F0 ATP synthase subunit B, membrane domain"/>
    <property type="match status" value="1"/>
</dbReference>
<dbReference type="HAMAP" id="MF_01398">
    <property type="entry name" value="ATP_synth_b_bprime"/>
    <property type="match status" value="1"/>
</dbReference>
<dbReference type="InterPro" id="IPR028987">
    <property type="entry name" value="ATP_synth_B-like_membr_sf"/>
</dbReference>
<dbReference type="InterPro" id="IPR002146">
    <property type="entry name" value="ATP_synth_b/b'su_bac/chlpt"/>
</dbReference>
<dbReference type="InterPro" id="IPR005864">
    <property type="entry name" value="ATP_synth_F0_bsu_bac"/>
</dbReference>
<dbReference type="InterPro" id="IPR050059">
    <property type="entry name" value="ATP_synthase_B_chain"/>
</dbReference>
<dbReference type="NCBIfam" id="TIGR01144">
    <property type="entry name" value="ATP_synt_b"/>
    <property type="match status" value="1"/>
</dbReference>
<dbReference type="NCBIfam" id="NF004411">
    <property type="entry name" value="PRK05759.1-2"/>
    <property type="match status" value="1"/>
</dbReference>
<dbReference type="PANTHER" id="PTHR33445:SF1">
    <property type="entry name" value="ATP SYNTHASE SUBUNIT B"/>
    <property type="match status" value="1"/>
</dbReference>
<dbReference type="PANTHER" id="PTHR33445">
    <property type="entry name" value="ATP SYNTHASE SUBUNIT B', CHLOROPLASTIC"/>
    <property type="match status" value="1"/>
</dbReference>
<dbReference type="Pfam" id="PF00430">
    <property type="entry name" value="ATP-synt_B"/>
    <property type="match status" value="1"/>
</dbReference>
<dbReference type="SUPFAM" id="SSF81573">
    <property type="entry name" value="F1F0 ATP synthase subunit B, membrane domain"/>
    <property type="match status" value="1"/>
</dbReference>
<keyword id="KW-0066">ATP synthesis</keyword>
<keyword id="KW-0997">Cell inner membrane</keyword>
<keyword id="KW-1003">Cell membrane</keyword>
<keyword id="KW-0138">CF(0)</keyword>
<keyword id="KW-0375">Hydrogen ion transport</keyword>
<keyword id="KW-0406">Ion transport</keyword>
<keyword id="KW-0472">Membrane</keyword>
<keyword id="KW-1185">Reference proteome</keyword>
<keyword id="KW-0812">Transmembrane</keyword>
<keyword id="KW-1133">Transmembrane helix</keyword>
<keyword id="KW-0813">Transport</keyword>
<proteinExistence type="inferred from homology"/>
<organism>
    <name type="scientific">Bordetella pertussis (strain Tohama I / ATCC BAA-589 / NCTC 13251)</name>
    <dbReference type="NCBI Taxonomy" id="257313"/>
    <lineage>
        <taxon>Bacteria</taxon>
        <taxon>Pseudomonadati</taxon>
        <taxon>Pseudomonadota</taxon>
        <taxon>Betaproteobacteria</taxon>
        <taxon>Burkholderiales</taxon>
        <taxon>Alcaligenaceae</taxon>
        <taxon>Bordetella</taxon>
    </lineage>
</organism>
<accession>Q7VU48</accession>